<name>RS16_BRUA1</name>
<organism>
    <name type="scientific">Brucella abortus (strain S19)</name>
    <dbReference type="NCBI Taxonomy" id="430066"/>
    <lineage>
        <taxon>Bacteria</taxon>
        <taxon>Pseudomonadati</taxon>
        <taxon>Pseudomonadota</taxon>
        <taxon>Alphaproteobacteria</taxon>
        <taxon>Hyphomicrobiales</taxon>
        <taxon>Brucellaceae</taxon>
        <taxon>Brucella/Ochrobactrum group</taxon>
        <taxon>Brucella</taxon>
    </lineage>
</organism>
<proteinExistence type="inferred from homology"/>
<dbReference type="EMBL" id="CP000887">
    <property type="protein sequence ID" value="ACD73195.1"/>
    <property type="molecule type" value="Genomic_DNA"/>
</dbReference>
<dbReference type="RefSeq" id="WP_002964901.1">
    <property type="nucleotide sequence ID" value="NC_010742.1"/>
</dbReference>
<dbReference type="SMR" id="B2S7P8"/>
<dbReference type="GeneID" id="93017838"/>
<dbReference type="KEGG" id="bmc:BAbS19_I17130"/>
<dbReference type="HOGENOM" id="CLU_100590_3_1_5"/>
<dbReference type="Proteomes" id="UP000002565">
    <property type="component" value="Chromosome 1"/>
</dbReference>
<dbReference type="GO" id="GO:0005737">
    <property type="term" value="C:cytoplasm"/>
    <property type="evidence" value="ECO:0007669"/>
    <property type="project" value="UniProtKB-ARBA"/>
</dbReference>
<dbReference type="GO" id="GO:0015935">
    <property type="term" value="C:small ribosomal subunit"/>
    <property type="evidence" value="ECO:0007669"/>
    <property type="project" value="TreeGrafter"/>
</dbReference>
<dbReference type="GO" id="GO:0003735">
    <property type="term" value="F:structural constituent of ribosome"/>
    <property type="evidence" value="ECO:0007669"/>
    <property type="project" value="InterPro"/>
</dbReference>
<dbReference type="GO" id="GO:0006412">
    <property type="term" value="P:translation"/>
    <property type="evidence" value="ECO:0007669"/>
    <property type="project" value="UniProtKB-UniRule"/>
</dbReference>
<dbReference type="Gene3D" id="3.30.1320.10">
    <property type="match status" value="1"/>
</dbReference>
<dbReference type="HAMAP" id="MF_00385">
    <property type="entry name" value="Ribosomal_bS16"/>
    <property type="match status" value="1"/>
</dbReference>
<dbReference type="InterPro" id="IPR000307">
    <property type="entry name" value="Ribosomal_bS16"/>
</dbReference>
<dbReference type="InterPro" id="IPR023803">
    <property type="entry name" value="Ribosomal_bS16_dom_sf"/>
</dbReference>
<dbReference type="NCBIfam" id="TIGR00002">
    <property type="entry name" value="S16"/>
    <property type="match status" value="1"/>
</dbReference>
<dbReference type="PANTHER" id="PTHR12919">
    <property type="entry name" value="30S RIBOSOMAL PROTEIN S16"/>
    <property type="match status" value="1"/>
</dbReference>
<dbReference type="PANTHER" id="PTHR12919:SF20">
    <property type="entry name" value="SMALL RIBOSOMAL SUBUNIT PROTEIN BS16M"/>
    <property type="match status" value="1"/>
</dbReference>
<dbReference type="Pfam" id="PF00886">
    <property type="entry name" value="Ribosomal_S16"/>
    <property type="match status" value="1"/>
</dbReference>
<dbReference type="SUPFAM" id="SSF54565">
    <property type="entry name" value="Ribosomal protein S16"/>
    <property type="match status" value="1"/>
</dbReference>
<feature type="chain" id="PRO_1000196348" description="Small ribosomal subunit protein bS16">
    <location>
        <begin position="1"/>
        <end position="134"/>
    </location>
</feature>
<feature type="region of interest" description="Disordered" evidence="2">
    <location>
        <begin position="79"/>
        <end position="134"/>
    </location>
</feature>
<feature type="compositionally biased region" description="Low complexity" evidence="2">
    <location>
        <begin position="115"/>
        <end position="134"/>
    </location>
</feature>
<sequence>MALKIRLARAGSKKRPYYHVVVADVRAPRDGRFIETVGSWNPVLPKDAERVKLDAERIQHWIAQGAQPTDRVLRFLDQAGIAKRPSRNNPTKGEPGKKAQERLALAKQAEEEASAKAAEAAAAAAAPAEEAASE</sequence>
<protein>
    <recommendedName>
        <fullName evidence="1">Small ribosomal subunit protein bS16</fullName>
    </recommendedName>
    <alternativeName>
        <fullName evidence="3">30S ribosomal protein S16</fullName>
    </alternativeName>
</protein>
<evidence type="ECO:0000255" key="1">
    <source>
        <dbReference type="HAMAP-Rule" id="MF_00385"/>
    </source>
</evidence>
<evidence type="ECO:0000256" key="2">
    <source>
        <dbReference type="SAM" id="MobiDB-lite"/>
    </source>
</evidence>
<evidence type="ECO:0000305" key="3"/>
<comment type="similarity">
    <text evidence="1">Belongs to the bacterial ribosomal protein bS16 family.</text>
</comment>
<gene>
    <name evidence="1" type="primary">rpsP</name>
    <name type="ordered locus">BAbS19_I17130</name>
</gene>
<accession>B2S7P8</accession>
<reference key="1">
    <citation type="journal article" date="2008" name="PLoS ONE">
        <title>Genome sequence of Brucella abortus vaccine strain S19 compared to virulent strains yields candidate virulence genes.</title>
        <authorList>
            <person name="Crasta O.R."/>
            <person name="Folkerts O."/>
            <person name="Fei Z."/>
            <person name="Mane S.P."/>
            <person name="Evans C."/>
            <person name="Martino-Catt S."/>
            <person name="Bricker B."/>
            <person name="Yu G."/>
            <person name="Du L."/>
            <person name="Sobral B.W."/>
        </authorList>
    </citation>
    <scope>NUCLEOTIDE SEQUENCE [LARGE SCALE GENOMIC DNA]</scope>
    <source>
        <strain>S19</strain>
    </source>
</reference>
<keyword id="KW-0687">Ribonucleoprotein</keyword>
<keyword id="KW-0689">Ribosomal protein</keyword>